<evidence type="ECO:0000250" key="1">
    <source>
        <dbReference type="UniProtKB" id="P00352"/>
    </source>
</evidence>
<evidence type="ECO:0000250" key="2">
    <source>
        <dbReference type="UniProtKB" id="P20000"/>
    </source>
</evidence>
<evidence type="ECO:0000250" key="3">
    <source>
        <dbReference type="UniProtKB" id="P51977"/>
    </source>
</evidence>
<evidence type="ECO:0000255" key="4">
    <source>
        <dbReference type="PROSITE-ProRule" id="PRU10007"/>
    </source>
</evidence>
<evidence type="ECO:0000269" key="5">
    <source>
    </source>
</evidence>
<evidence type="ECO:0000303" key="6">
    <source>
    </source>
</evidence>
<evidence type="ECO:0000303" key="7">
    <source>
    </source>
</evidence>
<evidence type="ECO:0000305" key="8"/>
<keyword id="KW-0520">NAD</keyword>
<keyword id="KW-0560">Oxidoreductase</keyword>
<reference key="1">
    <citation type="journal article" date="2018" name="Plant Physiol.">
        <title>Coexpression analysis identifies two oxidoreductases involved in the biosynthesis of the monoterpene acid moiety of natural pyrethrin insecticides in Tanacetum cinerariifolium.</title>
        <authorList>
            <person name="Xu H."/>
            <person name="Moghe G.D."/>
            <person name="Wiegert-Rininger K."/>
            <person name="Schilmiller A.L."/>
            <person name="Barry C.S."/>
            <person name="Last R.L."/>
            <person name="Pichersky E."/>
        </authorList>
    </citation>
    <scope>NUCLEOTIDE SEQUENCE [MRNA]</scope>
    <scope>FUNCTION</scope>
    <scope>CATALYTIC ACTIVITY</scope>
    <scope>PATHWAY</scope>
    <scope>TISSUE SPECIFICITY</scope>
</reference>
<reference key="2">
    <citation type="journal article" date="2005" name="Phytochemistry">
        <title>Biosynthesis of pyrethrin I in seedlings of Chrysanthemum cinerariaefolium.</title>
        <authorList>
            <person name="Matsuda K."/>
            <person name="Kikuta Y."/>
            <person name="Haba A."/>
            <person name="Nakayama K."/>
            <person name="Katsuda Y."/>
            <person name="Hatanaka A."/>
            <person name="Komai K."/>
        </authorList>
    </citation>
    <scope>REVIEW</scope>
</reference>
<reference key="3">
    <citation type="journal article" date="2019" name="Nat. Prod. Rep.">
        <title>Non-volatile natural products in plant glandular trichomes: chemistry, biological activities and biosynthesis.</title>
        <authorList>
            <person name="Liu Y."/>
            <person name="Jing S.-X."/>
            <person name="Luo S.-H."/>
            <person name="Li S.-H."/>
        </authorList>
    </citation>
    <scope>REVIEW</scope>
</reference>
<proteinExistence type="evidence at protein level"/>
<comment type="function">
    <text evidence="5 7">Component of the monoterpenoid pyrethrins biosynthesis; pyrethrins are widely used plant-derived pesticide (PubMed:30468448). Mediates the conversion of trans-chrysanthemal into trans-chrysanthemic acid (PubMed:29122986). Can also use octanal, hept-2-enal, dodecanal, citral, farnesal, citronellal and perillyl aldehyde as substrates (PubMed:29122986).</text>
</comment>
<comment type="catalytic activity">
    <reaction evidence="5">
        <text>an aldehyde + NAD(+) + H2O = a carboxylate + NADH + 2 H(+)</text>
        <dbReference type="Rhea" id="RHEA:16185"/>
        <dbReference type="ChEBI" id="CHEBI:15377"/>
        <dbReference type="ChEBI" id="CHEBI:15378"/>
        <dbReference type="ChEBI" id="CHEBI:17478"/>
        <dbReference type="ChEBI" id="CHEBI:29067"/>
        <dbReference type="ChEBI" id="CHEBI:57540"/>
        <dbReference type="ChEBI" id="CHEBI:57945"/>
        <dbReference type="EC" id="1.2.1.5"/>
    </reaction>
    <physiologicalReaction direction="left-to-right" evidence="5">
        <dbReference type="Rhea" id="RHEA:16186"/>
    </physiologicalReaction>
</comment>
<comment type="catalytic activity">
    <reaction evidence="5">
        <text>an aldehyde + NADP(+) + H2O = a carboxylate + NADPH + 2 H(+)</text>
        <dbReference type="Rhea" id="RHEA:11888"/>
        <dbReference type="ChEBI" id="CHEBI:15377"/>
        <dbReference type="ChEBI" id="CHEBI:15378"/>
        <dbReference type="ChEBI" id="CHEBI:17478"/>
        <dbReference type="ChEBI" id="CHEBI:29067"/>
        <dbReference type="ChEBI" id="CHEBI:57783"/>
        <dbReference type="ChEBI" id="CHEBI:58349"/>
        <dbReference type="EC" id="1.2.1.5"/>
    </reaction>
    <physiologicalReaction direction="left-to-right" evidence="5">
        <dbReference type="Rhea" id="RHEA:11889"/>
    </physiologicalReaction>
</comment>
<comment type="catalytic activity">
    <reaction evidence="5">
        <text>octanal + NADP(+) + H2O = octanoate + NADPH + 2 H(+)</text>
        <dbReference type="Rhea" id="RHEA:59904"/>
        <dbReference type="ChEBI" id="CHEBI:15377"/>
        <dbReference type="ChEBI" id="CHEBI:15378"/>
        <dbReference type="ChEBI" id="CHEBI:17935"/>
        <dbReference type="ChEBI" id="CHEBI:25646"/>
        <dbReference type="ChEBI" id="CHEBI:57783"/>
        <dbReference type="ChEBI" id="CHEBI:58349"/>
    </reaction>
    <physiologicalReaction direction="left-to-right" evidence="5">
        <dbReference type="Rhea" id="RHEA:59905"/>
    </physiologicalReaction>
</comment>
<comment type="catalytic activity">
    <reaction evidence="5">
        <text>(1R,3R)-chrysanthemal + NAD(+) + H2O = (1R,3R)-chrysanthemate + NADH + 2 H(+)</text>
        <dbReference type="Rhea" id="RHEA:60708"/>
        <dbReference type="ChEBI" id="CHEBI:15377"/>
        <dbReference type="ChEBI" id="CHEBI:15378"/>
        <dbReference type="ChEBI" id="CHEBI:57540"/>
        <dbReference type="ChEBI" id="CHEBI:57945"/>
        <dbReference type="ChEBI" id="CHEBI:143899"/>
        <dbReference type="ChEBI" id="CHEBI:143900"/>
    </reaction>
    <physiologicalReaction direction="left-to-right" evidence="5">
        <dbReference type="Rhea" id="RHEA:60709"/>
    </physiologicalReaction>
</comment>
<comment type="catalytic activity">
    <reaction evidence="5">
        <text>(1R,3R)-chrysanthemal + NADP(+) + H2O = (1R,3R)-chrysanthemate + NADPH + 2 H(+)</text>
        <dbReference type="Rhea" id="RHEA:60716"/>
        <dbReference type="ChEBI" id="CHEBI:15377"/>
        <dbReference type="ChEBI" id="CHEBI:15378"/>
        <dbReference type="ChEBI" id="CHEBI:57783"/>
        <dbReference type="ChEBI" id="CHEBI:58349"/>
        <dbReference type="ChEBI" id="CHEBI:143899"/>
        <dbReference type="ChEBI" id="CHEBI:143900"/>
    </reaction>
    <physiologicalReaction direction="left-to-right" evidence="5">
        <dbReference type="Rhea" id="RHEA:60717"/>
    </physiologicalReaction>
</comment>
<comment type="catalytic activity">
    <reaction evidence="5">
        <text>(E)-hept-2-enal + NADP(+) + H2O = (E)-hept-2-enoate + NADPH + 2 H(+)</text>
        <dbReference type="Rhea" id="RHEA:60720"/>
        <dbReference type="ChEBI" id="CHEBI:15377"/>
        <dbReference type="ChEBI" id="CHEBI:15378"/>
        <dbReference type="ChEBI" id="CHEBI:57783"/>
        <dbReference type="ChEBI" id="CHEBI:58349"/>
        <dbReference type="ChEBI" id="CHEBI:143912"/>
        <dbReference type="ChEBI" id="CHEBI:143913"/>
    </reaction>
    <physiologicalReaction direction="left-to-right" evidence="5">
        <dbReference type="Rhea" id="RHEA:60721"/>
    </physiologicalReaction>
</comment>
<comment type="catalytic activity">
    <reaction evidence="5">
        <text>dodecanal + NADP(+) + H2O = dodecanoate + NADPH + 2 H(+)</text>
        <dbReference type="Rhea" id="RHEA:60724"/>
        <dbReference type="ChEBI" id="CHEBI:15377"/>
        <dbReference type="ChEBI" id="CHEBI:15378"/>
        <dbReference type="ChEBI" id="CHEBI:18262"/>
        <dbReference type="ChEBI" id="CHEBI:27836"/>
        <dbReference type="ChEBI" id="CHEBI:57783"/>
        <dbReference type="ChEBI" id="CHEBI:58349"/>
    </reaction>
    <physiologicalReaction direction="left-to-right" evidence="5">
        <dbReference type="Rhea" id="RHEA:60725"/>
    </physiologicalReaction>
</comment>
<comment type="catalytic activity">
    <reaction evidence="5">
        <text>citral + NADP(+) + H2O = 3,7-dimethylocta-2,6-dienoate + NADPH + 2 H(+)</text>
        <dbReference type="Rhea" id="RHEA:60728"/>
        <dbReference type="ChEBI" id="CHEBI:15377"/>
        <dbReference type="ChEBI" id="CHEBI:15378"/>
        <dbReference type="ChEBI" id="CHEBI:23316"/>
        <dbReference type="ChEBI" id="CHEBI:57783"/>
        <dbReference type="ChEBI" id="CHEBI:58349"/>
        <dbReference type="ChEBI" id="CHEBI:142930"/>
    </reaction>
    <physiologicalReaction direction="left-to-right" evidence="5">
        <dbReference type="Rhea" id="RHEA:60729"/>
    </physiologicalReaction>
</comment>
<comment type="catalytic activity">
    <reaction evidence="5">
        <text>perillyl aldehyde + NADP(+) + H2O = perillate + NADPH + 2 H(+)</text>
        <dbReference type="Rhea" id="RHEA:60732"/>
        <dbReference type="ChEBI" id="CHEBI:15377"/>
        <dbReference type="ChEBI" id="CHEBI:15378"/>
        <dbReference type="ChEBI" id="CHEBI:15421"/>
        <dbReference type="ChEBI" id="CHEBI:57783"/>
        <dbReference type="ChEBI" id="CHEBI:58349"/>
        <dbReference type="ChEBI" id="CHEBI:62641"/>
    </reaction>
    <physiologicalReaction direction="left-to-right" evidence="5">
        <dbReference type="Rhea" id="RHEA:60733"/>
    </physiologicalReaction>
</comment>
<comment type="catalytic activity">
    <reaction evidence="5">
        <text>(2E,6E)-farnesal + NADP(+) + H2O = (2E,6E)-farnesoate + NADPH + 2 H(+)</text>
        <dbReference type="Rhea" id="RHEA:60736"/>
        <dbReference type="ChEBI" id="CHEBI:15377"/>
        <dbReference type="ChEBI" id="CHEBI:15378"/>
        <dbReference type="ChEBI" id="CHEBI:15894"/>
        <dbReference type="ChEBI" id="CHEBI:57783"/>
        <dbReference type="ChEBI" id="CHEBI:58349"/>
        <dbReference type="ChEBI" id="CHEBI:83276"/>
    </reaction>
    <physiologicalReaction direction="left-to-right" evidence="5">
        <dbReference type="Rhea" id="RHEA:60737"/>
    </physiologicalReaction>
</comment>
<comment type="catalytic activity">
    <reaction evidence="5">
        <text>(S)-(-)-citronellal + NADP(+) + H2O = (S)-(-)-citronellate + NADPH + 2 H(+)</text>
        <dbReference type="Rhea" id="RHEA:60740"/>
        <dbReference type="ChEBI" id="CHEBI:368"/>
        <dbReference type="ChEBI" id="CHEBI:15377"/>
        <dbReference type="ChEBI" id="CHEBI:15378"/>
        <dbReference type="ChEBI" id="CHEBI:57783"/>
        <dbReference type="ChEBI" id="CHEBI:58349"/>
        <dbReference type="ChEBI" id="CHEBI:143914"/>
    </reaction>
    <physiologicalReaction direction="left-to-right" evidence="5">
        <dbReference type="Rhea" id="RHEA:60741"/>
    </physiologicalReaction>
</comment>
<comment type="biophysicochemical properties">
    <kinetics>
        <KM evidence="5">4.6 uM for trans-chrysanthemal (in the presence of NAD(+))</KM>
        <KM evidence="5">4.4 uM for trans-chrysanthemal (in the presence of NADP(+))</KM>
        <KM evidence="5">20.4 uM for NAD(+)</KM>
        <KM evidence="5">68.6 uM for NADP(+)</KM>
        <text evidence="5">kcat is 0.11 sec(-1) with trans-chrysanthemal as substrate (in the presence of NAD(+)) (PubMed:29122986). kcat is 0.096 sec(-1) with trans-chrysanthemal as substrate (in the presence of NADP(+)) (PubMed:29122986). kcat is 0.09 sec(-1) with NAD(+) as substrate (in the presence of trans-chrysanthemal) (PubMed:29122986). kcat is 0.086 sec(-1) with NADP(+) as substrate (in the presence of trans-chrysanthemal) (PubMed:29122986).</text>
    </kinetics>
</comment>
<comment type="pathway">
    <text evidence="5">Isoprenoid biosynthesis.</text>
</comment>
<comment type="subunit">
    <text evidence="3">Homotetramer.</text>
</comment>
<comment type="tissue specificity">
    <text evidence="5">Expressed in flowers and disk florets.</text>
</comment>
<comment type="similarity">
    <text evidence="8">Belongs to the aldehyde dehydrogenase family.</text>
</comment>
<organism>
    <name type="scientific">Tanacetum cinerariifolium</name>
    <name type="common">Dalmatian daisy</name>
    <name type="synonym">Chrysanthemum cinerariifolium</name>
    <dbReference type="NCBI Taxonomy" id="118510"/>
    <lineage>
        <taxon>Eukaryota</taxon>
        <taxon>Viridiplantae</taxon>
        <taxon>Streptophyta</taxon>
        <taxon>Embryophyta</taxon>
        <taxon>Tracheophyta</taxon>
        <taxon>Spermatophyta</taxon>
        <taxon>Magnoliopsida</taxon>
        <taxon>eudicotyledons</taxon>
        <taxon>Gunneridae</taxon>
        <taxon>Pentapetalae</taxon>
        <taxon>asterids</taxon>
        <taxon>campanulids</taxon>
        <taxon>Asterales</taxon>
        <taxon>Asteraceae</taxon>
        <taxon>Asteroideae</taxon>
        <taxon>Anthemideae</taxon>
        <taxon>Anthemidinae</taxon>
        <taxon>Tanacetum</taxon>
    </lineage>
</organism>
<gene>
    <name evidence="6" type="primary">ALDH1</name>
</gene>
<dbReference type="EC" id="1.2.1.5" evidence="5"/>
<dbReference type="EC" id="1.2.1.-" evidence="5"/>
<dbReference type="EMBL" id="MF497445">
    <property type="protein sequence ID" value="AUQ44119.1"/>
    <property type="molecule type" value="mRNA"/>
</dbReference>
<dbReference type="SMR" id="A0A2I7G3B0"/>
<dbReference type="BioCyc" id="MetaCyc:MONOMER-20953"/>
<dbReference type="GO" id="GO:0004029">
    <property type="term" value="F:aldehyde dehydrogenase (NAD+) activity"/>
    <property type="evidence" value="ECO:0000314"/>
    <property type="project" value="UniProtKB"/>
</dbReference>
<dbReference type="GO" id="GO:0033721">
    <property type="term" value="F:aldehyde dehydrogenase (NADP+) activity"/>
    <property type="evidence" value="ECO:0007669"/>
    <property type="project" value="RHEA"/>
</dbReference>
<dbReference type="GO" id="GO:0008299">
    <property type="term" value="P:isoprenoid biosynthetic process"/>
    <property type="evidence" value="ECO:0000314"/>
    <property type="project" value="UniProtKB"/>
</dbReference>
<dbReference type="CDD" id="cd07091">
    <property type="entry name" value="ALDH_F1-2_Ald2-like"/>
    <property type="match status" value="1"/>
</dbReference>
<dbReference type="FunFam" id="3.40.605.10:FF:000011">
    <property type="entry name" value="ALD5p Mitochondrial aldehyde dehydrogenase"/>
    <property type="match status" value="1"/>
</dbReference>
<dbReference type="FunFam" id="3.40.605.10:FF:000026">
    <property type="entry name" value="Aldehyde dehydrogenase, putative"/>
    <property type="match status" value="1"/>
</dbReference>
<dbReference type="FunFam" id="3.40.309.10:FF:000065">
    <property type="entry name" value="Aldehyde dehydrogenase3"/>
    <property type="match status" value="1"/>
</dbReference>
<dbReference type="Gene3D" id="3.40.605.10">
    <property type="entry name" value="Aldehyde Dehydrogenase, Chain A, domain 1"/>
    <property type="match status" value="1"/>
</dbReference>
<dbReference type="Gene3D" id="3.40.309.10">
    <property type="entry name" value="Aldehyde Dehydrogenase, Chain A, domain 2"/>
    <property type="match status" value="1"/>
</dbReference>
<dbReference type="InterPro" id="IPR016161">
    <property type="entry name" value="Ald_DH/histidinol_DH"/>
</dbReference>
<dbReference type="InterPro" id="IPR016163">
    <property type="entry name" value="Ald_DH_C"/>
</dbReference>
<dbReference type="InterPro" id="IPR029510">
    <property type="entry name" value="Ald_DH_CS_GLU"/>
</dbReference>
<dbReference type="InterPro" id="IPR016162">
    <property type="entry name" value="Ald_DH_N"/>
</dbReference>
<dbReference type="InterPro" id="IPR015590">
    <property type="entry name" value="Aldehyde_DH_dom"/>
</dbReference>
<dbReference type="PANTHER" id="PTHR11699">
    <property type="entry name" value="ALDEHYDE DEHYDROGENASE-RELATED"/>
    <property type="match status" value="1"/>
</dbReference>
<dbReference type="Pfam" id="PF00171">
    <property type="entry name" value="Aldedh"/>
    <property type="match status" value="1"/>
</dbReference>
<dbReference type="SUPFAM" id="SSF53720">
    <property type="entry name" value="ALDH-like"/>
    <property type="match status" value="1"/>
</dbReference>
<dbReference type="PROSITE" id="PS00687">
    <property type="entry name" value="ALDEHYDE_DEHYDR_GLU"/>
    <property type="match status" value="1"/>
</dbReference>
<accession>A0A2I7G3B0</accession>
<protein>
    <recommendedName>
        <fullName evidence="6">Aldehyde dehydrogenase 1</fullName>
        <shortName evidence="6">TcALDH1</shortName>
        <ecNumber evidence="5">1.2.1.5</ecNumber>
    </recommendedName>
    <alternativeName>
        <fullName evidence="8">Trans-chrysanthemic acid synthase</fullName>
        <ecNumber evidence="5">1.2.1.-</ecNumber>
    </alternativeName>
</protein>
<name>ALDH1_TANCI</name>
<feature type="chain" id="PRO_0000447849" description="Aldehyde dehydrogenase 1">
    <location>
        <begin position="1"/>
        <end position="499"/>
    </location>
</feature>
<feature type="active site" description="Proton acceptor" evidence="4">
    <location>
        <position position="266"/>
    </location>
</feature>
<feature type="active site" description="Nucleophile" evidence="3">
    <location>
        <position position="300"/>
    </location>
</feature>
<feature type="binding site" evidence="3">
    <location>
        <begin position="164"/>
        <end position="167"/>
    </location>
    <ligand>
        <name>NAD(+)</name>
        <dbReference type="ChEBI" id="CHEBI:57540"/>
    </ligand>
</feature>
<feature type="binding site" evidence="2">
    <location>
        <begin position="164"/>
        <end position="166"/>
    </location>
    <ligand>
        <name>NAD(+)</name>
        <dbReference type="ChEBI" id="CHEBI:57540"/>
    </ligand>
</feature>
<feature type="binding site" evidence="3">
    <location>
        <begin position="190"/>
        <end position="193"/>
    </location>
    <ligand>
        <name>NAD(+)</name>
        <dbReference type="ChEBI" id="CHEBI:57540"/>
    </ligand>
</feature>
<feature type="binding site" evidence="3">
    <location>
        <begin position="223"/>
        <end position="224"/>
    </location>
    <ligand>
        <name>NAD(+)</name>
        <dbReference type="ChEBI" id="CHEBI:57540"/>
    </ligand>
</feature>
<feature type="binding site" evidence="2">
    <location>
        <begin position="243"/>
        <end position="248"/>
    </location>
    <ligand>
        <name>NAD(+)</name>
        <dbReference type="ChEBI" id="CHEBI:57540"/>
    </ligand>
</feature>
<feature type="binding site" evidence="3">
    <location>
        <begin position="243"/>
        <end position="244"/>
    </location>
    <ligand>
        <name>NAD(+)</name>
        <dbReference type="ChEBI" id="CHEBI:57540"/>
    </ligand>
</feature>
<feature type="binding site" evidence="1">
    <location>
        <begin position="266"/>
        <end position="268"/>
    </location>
    <ligand>
        <name>NAD(+)</name>
        <dbReference type="ChEBI" id="CHEBI:57540"/>
    </ligand>
</feature>
<feature type="binding site" evidence="1">
    <location>
        <begin position="346"/>
        <end position="350"/>
    </location>
    <ligand>
        <name>NAD(+)</name>
        <dbReference type="ChEBI" id="CHEBI:57540"/>
    </ligand>
</feature>
<feature type="binding site" evidence="3">
    <location>
        <begin position="397"/>
        <end position="399"/>
    </location>
    <ligand>
        <name>NAD(+)</name>
        <dbReference type="ChEBI" id="CHEBI:57540"/>
    </ligand>
</feature>
<feature type="site" description="Transition state stabilizer" evidence="2">
    <location>
        <position position="167"/>
    </location>
</feature>
<sequence length="499" mass="53988">MSSGANGNSKSLAYDIKFTKLFINGEFVDSISGSTFETIDPATEEVLATVAEGREEDVDLAVKAAREAFDNGPWPRLSGEARRKILLKFADLIEENADEIATLEVIDTGKPFQIARYVENSWTSETFRYFAGAADKIRGATLKMSSDFQAYTLREPIGVVGHIIPWNAPAYLFAMKVAPALAAGCTVVIKPAENTPLVGLFMAYLSKLAGVPDGVINVVNGFGSTAGAAVSSHMDIDAVTFTGSTKVGRTIMQAAAASNLKPVSLELGGKSPFIVFDDADIEKAAEIAVLGVLSNKGELCVAGSRVFVHEGIYDAFVKKLEATVKNWATGDRFDAATRHGPQNNKQQYEKVLSYIELGKKEGATLVTGGKPFGNKGYYIEPTLFTNVTDEMTIAKEEIFGPVIMVLKFKTIEEVIRRANATTYGLAAGIMTKNIDIANTVTRSIRAGSVWVNCYLALDRDTPFGGYKMSGFGREQGLEALEHYLQVKTVTTPIYNSPWL</sequence>